<keyword id="KW-0067">ATP-binding</keyword>
<keyword id="KW-0315">Glutamine amidotransferase</keyword>
<keyword id="KW-0436">Ligase</keyword>
<keyword id="KW-0460">Magnesium</keyword>
<keyword id="KW-0479">Metal-binding</keyword>
<keyword id="KW-0547">Nucleotide-binding</keyword>
<keyword id="KW-0665">Pyrimidine biosynthesis</keyword>
<gene>
    <name evidence="1" type="primary">pyrG</name>
    <name type="ordered locus">SCH_2887</name>
</gene>
<proteinExistence type="inferred from homology"/>
<sequence>MTTNYIFVTGGVVSSLGKGIAAASLAAILEARGLNVTIMKLDPYINVDPGTMSPIQHGEVFVTEDGAETDLDLGHYERFIRTKMSRRNNFTTGRIYSDVLRKERRGDYLGATVQVIPHITNAIKERVLEGGEGHDVVLVEIGGTVGDIESLPFLEAIRQLAVDIGREHALFMHLTLVPYLAAAGEVKTKPTQHSVKELLSIGIQPDILICRSDRAVPANERAKIALFCNVPEKAVISMKDVDSIYKIPGLLKSQGLDDYICKRFSLNCPEANLSEWEQVIYEEANPAGEVTIGMVGKYIELPDAYKSVIEALKHGGLKNRVTVNIKLIDSQDVETRGVEILKDLDAILIPGGFGYRGVEGKIATARYARENNIPYLGICLGMQVALIEFARNVAGMDNANSTEFVPDCKYPVVALITEWRDEDGNVEVRSEKSDLGGTMRLGAQQCQLSDDSLVRQLYGASTIVERHRHRYEVNNMLLKQIEAAGLRVAGRSGDDQLVEIIEVPNHPWFVACQFHPEFTSTPRDGHPLFAGFVKAANEHQKRQAK</sequence>
<evidence type="ECO:0000255" key="1">
    <source>
        <dbReference type="HAMAP-Rule" id="MF_01227"/>
    </source>
</evidence>
<reference key="1">
    <citation type="journal article" date="2005" name="Nucleic Acids Res.">
        <title>The genome sequence of Salmonella enterica serovar Choleraesuis, a highly invasive and resistant zoonotic pathogen.</title>
        <authorList>
            <person name="Chiu C.-H."/>
            <person name="Tang P."/>
            <person name="Chu C."/>
            <person name="Hu S."/>
            <person name="Bao Q."/>
            <person name="Yu J."/>
            <person name="Chou Y.-Y."/>
            <person name="Wang H.-S."/>
            <person name="Lee Y.-S."/>
        </authorList>
    </citation>
    <scope>NUCLEOTIDE SEQUENCE [LARGE SCALE GENOMIC DNA]</scope>
    <source>
        <strain>SC-B67</strain>
    </source>
</reference>
<dbReference type="EC" id="6.3.4.2" evidence="1"/>
<dbReference type="EMBL" id="AE017220">
    <property type="protein sequence ID" value="AAX66793.1"/>
    <property type="molecule type" value="Genomic_DNA"/>
</dbReference>
<dbReference type="RefSeq" id="WP_000210863.1">
    <property type="nucleotide sequence ID" value="NC_006905.1"/>
</dbReference>
<dbReference type="SMR" id="Q57KG9"/>
<dbReference type="KEGG" id="sec:SCH_2887"/>
<dbReference type="HOGENOM" id="CLU_011675_5_0_6"/>
<dbReference type="UniPathway" id="UPA00159">
    <property type="reaction ID" value="UER00277"/>
</dbReference>
<dbReference type="Proteomes" id="UP000000538">
    <property type="component" value="Chromosome"/>
</dbReference>
<dbReference type="GO" id="GO:0005829">
    <property type="term" value="C:cytosol"/>
    <property type="evidence" value="ECO:0007669"/>
    <property type="project" value="TreeGrafter"/>
</dbReference>
<dbReference type="GO" id="GO:0005524">
    <property type="term" value="F:ATP binding"/>
    <property type="evidence" value="ECO:0007669"/>
    <property type="project" value="UniProtKB-KW"/>
</dbReference>
<dbReference type="GO" id="GO:0003883">
    <property type="term" value="F:CTP synthase activity"/>
    <property type="evidence" value="ECO:0007669"/>
    <property type="project" value="UniProtKB-UniRule"/>
</dbReference>
<dbReference type="GO" id="GO:0004359">
    <property type="term" value="F:glutaminase activity"/>
    <property type="evidence" value="ECO:0007669"/>
    <property type="project" value="RHEA"/>
</dbReference>
<dbReference type="GO" id="GO:0042802">
    <property type="term" value="F:identical protein binding"/>
    <property type="evidence" value="ECO:0007669"/>
    <property type="project" value="TreeGrafter"/>
</dbReference>
<dbReference type="GO" id="GO:0046872">
    <property type="term" value="F:metal ion binding"/>
    <property type="evidence" value="ECO:0007669"/>
    <property type="project" value="UniProtKB-KW"/>
</dbReference>
<dbReference type="GO" id="GO:0044210">
    <property type="term" value="P:'de novo' CTP biosynthetic process"/>
    <property type="evidence" value="ECO:0007669"/>
    <property type="project" value="UniProtKB-UniRule"/>
</dbReference>
<dbReference type="GO" id="GO:0019856">
    <property type="term" value="P:pyrimidine nucleobase biosynthetic process"/>
    <property type="evidence" value="ECO:0007669"/>
    <property type="project" value="TreeGrafter"/>
</dbReference>
<dbReference type="CDD" id="cd03113">
    <property type="entry name" value="CTPS_N"/>
    <property type="match status" value="1"/>
</dbReference>
<dbReference type="CDD" id="cd01746">
    <property type="entry name" value="GATase1_CTP_Synthase"/>
    <property type="match status" value="1"/>
</dbReference>
<dbReference type="FunFam" id="3.40.50.300:FF:000009">
    <property type="entry name" value="CTP synthase"/>
    <property type="match status" value="1"/>
</dbReference>
<dbReference type="FunFam" id="3.40.50.880:FF:000002">
    <property type="entry name" value="CTP synthase"/>
    <property type="match status" value="1"/>
</dbReference>
<dbReference type="Gene3D" id="3.40.50.880">
    <property type="match status" value="1"/>
</dbReference>
<dbReference type="Gene3D" id="3.40.50.300">
    <property type="entry name" value="P-loop containing nucleotide triphosphate hydrolases"/>
    <property type="match status" value="1"/>
</dbReference>
<dbReference type="HAMAP" id="MF_01227">
    <property type="entry name" value="PyrG"/>
    <property type="match status" value="1"/>
</dbReference>
<dbReference type="InterPro" id="IPR029062">
    <property type="entry name" value="Class_I_gatase-like"/>
</dbReference>
<dbReference type="InterPro" id="IPR004468">
    <property type="entry name" value="CTP_synthase"/>
</dbReference>
<dbReference type="InterPro" id="IPR017456">
    <property type="entry name" value="CTP_synthase_N"/>
</dbReference>
<dbReference type="InterPro" id="IPR017926">
    <property type="entry name" value="GATASE"/>
</dbReference>
<dbReference type="InterPro" id="IPR033828">
    <property type="entry name" value="GATase1_CTP_Synthase"/>
</dbReference>
<dbReference type="InterPro" id="IPR027417">
    <property type="entry name" value="P-loop_NTPase"/>
</dbReference>
<dbReference type="NCBIfam" id="NF003792">
    <property type="entry name" value="PRK05380.1"/>
    <property type="match status" value="1"/>
</dbReference>
<dbReference type="NCBIfam" id="TIGR00337">
    <property type="entry name" value="PyrG"/>
    <property type="match status" value="1"/>
</dbReference>
<dbReference type="PANTHER" id="PTHR11550">
    <property type="entry name" value="CTP SYNTHASE"/>
    <property type="match status" value="1"/>
</dbReference>
<dbReference type="PANTHER" id="PTHR11550:SF0">
    <property type="entry name" value="CTP SYNTHASE-RELATED"/>
    <property type="match status" value="1"/>
</dbReference>
<dbReference type="Pfam" id="PF06418">
    <property type="entry name" value="CTP_synth_N"/>
    <property type="match status" value="1"/>
</dbReference>
<dbReference type="Pfam" id="PF00117">
    <property type="entry name" value="GATase"/>
    <property type="match status" value="1"/>
</dbReference>
<dbReference type="SUPFAM" id="SSF52317">
    <property type="entry name" value="Class I glutamine amidotransferase-like"/>
    <property type="match status" value="1"/>
</dbReference>
<dbReference type="SUPFAM" id="SSF52540">
    <property type="entry name" value="P-loop containing nucleoside triphosphate hydrolases"/>
    <property type="match status" value="1"/>
</dbReference>
<dbReference type="PROSITE" id="PS51273">
    <property type="entry name" value="GATASE_TYPE_1"/>
    <property type="match status" value="1"/>
</dbReference>
<comment type="function">
    <text evidence="1">Catalyzes the ATP-dependent amination of UTP to CTP with either L-glutamine or ammonia as the source of nitrogen. Regulates intracellular CTP levels through interactions with the four ribonucleotide triphosphates.</text>
</comment>
<comment type="catalytic activity">
    <reaction evidence="1">
        <text>UTP + L-glutamine + ATP + H2O = CTP + L-glutamate + ADP + phosphate + 2 H(+)</text>
        <dbReference type="Rhea" id="RHEA:26426"/>
        <dbReference type="ChEBI" id="CHEBI:15377"/>
        <dbReference type="ChEBI" id="CHEBI:15378"/>
        <dbReference type="ChEBI" id="CHEBI:29985"/>
        <dbReference type="ChEBI" id="CHEBI:30616"/>
        <dbReference type="ChEBI" id="CHEBI:37563"/>
        <dbReference type="ChEBI" id="CHEBI:43474"/>
        <dbReference type="ChEBI" id="CHEBI:46398"/>
        <dbReference type="ChEBI" id="CHEBI:58359"/>
        <dbReference type="ChEBI" id="CHEBI:456216"/>
        <dbReference type="EC" id="6.3.4.2"/>
    </reaction>
</comment>
<comment type="catalytic activity">
    <reaction evidence="1">
        <text>L-glutamine + H2O = L-glutamate + NH4(+)</text>
        <dbReference type="Rhea" id="RHEA:15889"/>
        <dbReference type="ChEBI" id="CHEBI:15377"/>
        <dbReference type="ChEBI" id="CHEBI:28938"/>
        <dbReference type="ChEBI" id="CHEBI:29985"/>
        <dbReference type="ChEBI" id="CHEBI:58359"/>
    </reaction>
</comment>
<comment type="catalytic activity">
    <reaction evidence="1">
        <text>UTP + NH4(+) + ATP = CTP + ADP + phosphate + 2 H(+)</text>
        <dbReference type="Rhea" id="RHEA:16597"/>
        <dbReference type="ChEBI" id="CHEBI:15378"/>
        <dbReference type="ChEBI" id="CHEBI:28938"/>
        <dbReference type="ChEBI" id="CHEBI:30616"/>
        <dbReference type="ChEBI" id="CHEBI:37563"/>
        <dbReference type="ChEBI" id="CHEBI:43474"/>
        <dbReference type="ChEBI" id="CHEBI:46398"/>
        <dbReference type="ChEBI" id="CHEBI:456216"/>
    </reaction>
</comment>
<comment type="activity regulation">
    <text evidence="1">Allosterically activated by GTP, when glutamine is the substrate; GTP has no effect on the reaction when ammonia is the substrate. The allosteric effector GTP functions by stabilizing the protein conformation that binds the tetrahedral intermediate(s) formed during glutamine hydrolysis. Inhibited by the product CTP, via allosteric rather than competitive inhibition.</text>
</comment>
<comment type="pathway">
    <text evidence="1">Pyrimidine metabolism; CTP biosynthesis via de novo pathway; CTP from UDP: step 2/2.</text>
</comment>
<comment type="subunit">
    <text evidence="1">Homotetramer.</text>
</comment>
<comment type="miscellaneous">
    <text evidence="1">CTPSs have evolved a hybrid strategy for distinguishing between UTP and CTP. The overlapping regions of the product feedback inhibitory and substrate sites recognize a common feature in both compounds, the triphosphate moiety. To differentiate isosteric substrate and product pyrimidine rings, an additional pocket far from the expected kinase/ligase catalytic site, specifically recognizes the cytosine and ribose portions of the product inhibitor.</text>
</comment>
<comment type="similarity">
    <text evidence="1">Belongs to the CTP synthase family.</text>
</comment>
<name>PYRG_SALCH</name>
<organism>
    <name type="scientific">Salmonella choleraesuis (strain SC-B67)</name>
    <dbReference type="NCBI Taxonomy" id="321314"/>
    <lineage>
        <taxon>Bacteria</taxon>
        <taxon>Pseudomonadati</taxon>
        <taxon>Pseudomonadota</taxon>
        <taxon>Gammaproteobacteria</taxon>
        <taxon>Enterobacterales</taxon>
        <taxon>Enterobacteriaceae</taxon>
        <taxon>Salmonella</taxon>
    </lineage>
</organism>
<feature type="chain" id="PRO_0000266210" description="CTP synthase">
    <location>
        <begin position="1"/>
        <end position="545"/>
    </location>
</feature>
<feature type="domain" description="Glutamine amidotransferase type-1" evidence="1">
    <location>
        <begin position="291"/>
        <end position="542"/>
    </location>
</feature>
<feature type="region of interest" description="Amidoligase domain" evidence="1">
    <location>
        <begin position="1"/>
        <end position="266"/>
    </location>
</feature>
<feature type="active site" description="Nucleophile; for glutamine hydrolysis" evidence="1">
    <location>
        <position position="379"/>
    </location>
</feature>
<feature type="active site" evidence="1">
    <location>
        <position position="515"/>
    </location>
</feature>
<feature type="active site" evidence="1">
    <location>
        <position position="517"/>
    </location>
</feature>
<feature type="binding site" evidence="1">
    <location>
        <position position="14"/>
    </location>
    <ligand>
        <name>CTP</name>
        <dbReference type="ChEBI" id="CHEBI:37563"/>
        <note>allosteric inhibitor</note>
    </ligand>
</feature>
<feature type="binding site" evidence="1">
    <location>
        <position position="14"/>
    </location>
    <ligand>
        <name>UTP</name>
        <dbReference type="ChEBI" id="CHEBI:46398"/>
    </ligand>
</feature>
<feature type="binding site" evidence="1">
    <location>
        <begin position="15"/>
        <end position="20"/>
    </location>
    <ligand>
        <name>ATP</name>
        <dbReference type="ChEBI" id="CHEBI:30616"/>
    </ligand>
</feature>
<feature type="binding site" evidence="1">
    <location>
        <position position="72"/>
    </location>
    <ligand>
        <name>ATP</name>
        <dbReference type="ChEBI" id="CHEBI:30616"/>
    </ligand>
</feature>
<feature type="binding site" evidence="1">
    <location>
        <position position="72"/>
    </location>
    <ligand>
        <name>Mg(2+)</name>
        <dbReference type="ChEBI" id="CHEBI:18420"/>
    </ligand>
</feature>
<feature type="binding site" evidence="1">
    <location>
        <position position="140"/>
    </location>
    <ligand>
        <name>Mg(2+)</name>
        <dbReference type="ChEBI" id="CHEBI:18420"/>
    </ligand>
</feature>
<feature type="binding site" evidence="1">
    <location>
        <begin position="147"/>
        <end position="149"/>
    </location>
    <ligand>
        <name>CTP</name>
        <dbReference type="ChEBI" id="CHEBI:37563"/>
        <note>allosteric inhibitor</note>
    </ligand>
</feature>
<feature type="binding site" evidence="1">
    <location>
        <begin position="187"/>
        <end position="192"/>
    </location>
    <ligand>
        <name>CTP</name>
        <dbReference type="ChEBI" id="CHEBI:37563"/>
        <note>allosteric inhibitor</note>
    </ligand>
</feature>
<feature type="binding site" evidence="1">
    <location>
        <begin position="187"/>
        <end position="192"/>
    </location>
    <ligand>
        <name>UTP</name>
        <dbReference type="ChEBI" id="CHEBI:46398"/>
    </ligand>
</feature>
<feature type="binding site" evidence="1">
    <location>
        <position position="223"/>
    </location>
    <ligand>
        <name>CTP</name>
        <dbReference type="ChEBI" id="CHEBI:37563"/>
        <note>allosteric inhibitor</note>
    </ligand>
</feature>
<feature type="binding site" evidence="1">
    <location>
        <position position="223"/>
    </location>
    <ligand>
        <name>UTP</name>
        <dbReference type="ChEBI" id="CHEBI:46398"/>
    </ligand>
</feature>
<feature type="binding site" evidence="1">
    <location>
        <begin position="239"/>
        <end position="241"/>
    </location>
    <ligand>
        <name>ATP</name>
        <dbReference type="ChEBI" id="CHEBI:30616"/>
    </ligand>
</feature>
<feature type="binding site" evidence="1">
    <location>
        <position position="352"/>
    </location>
    <ligand>
        <name>L-glutamine</name>
        <dbReference type="ChEBI" id="CHEBI:58359"/>
    </ligand>
</feature>
<feature type="binding site" evidence="1">
    <location>
        <begin position="380"/>
        <end position="383"/>
    </location>
    <ligand>
        <name>L-glutamine</name>
        <dbReference type="ChEBI" id="CHEBI:58359"/>
    </ligand>
</feature>
<feature type="binding site" evidence="1">
    <location>
        <position position="403"/>
    </location>
    <ligand>
        <name>L-glutamine</name>
        <dbReference type="ChEBI" id="CHEBI:58359"/>
    </ligand>
</feature>
<feature type="binding site" evidence="1">
    <location>
        <position position="470"/>
    </location>
    <ligand>
        <name>L-glutamine</name>
        <dbReference type="ChEBI" id="CHEBI:58359"/>
    </ligand>
</feature>
<protein>
    <recommendedName>
        <fullName evidence="1">CTP synthase</fullName>
        <ecNumber evidence="1">6.3.4.2</ecNumber>
    </recommendedName>
    <alternativeName>
        <fullName evidence="1">Cytidine 5'-triphosphate synthase</fullName>
    </alternativeName>
    <alternativeName>
        <fullName evidence="1">Cytidine triphosphate synthetase</fullName>
        <shortName evidence="1">CTP synthetase</shortName>
        <shortName evidence="1">CTPS</shortName>
    </alternativeName>
    <alternativeName>
        <fullName evidence="1">UTP--ammonia ligase</fullName>
    </alternativeName>
</protein>
<accession>Q57KG9</accession>